<dbReference type="EMBL" id="M34456">
    <property type="protein sequence ID" value="AAA33248.1"/>
    <property type="molecule type" value="mRNA"/>
</dbReference>
<dbReference type="EMBL" id="AAFI02000015">
    <property type="protein sequence ID" value="EAL69153.1"/>
    <property type="molecule type" value="Genomic_DNA"/>
</dbReference>
<dbReference type="PIR" id="B34716">
    <property type="entry name" value="B34716"/>
</dbReference>
<dbReference type="RefSeq" id="XP_643115.1">
    <property type="nucleotide sequence ID" value="XM_638023.1"/>
</dbReference>
<dbReference type="SMR" id="P20791"/>
<dbReference type="FunCoup" id="P20791">
    <property type="interactions" value="405"/>
</dbReference>
<dbReference type="STRING" id="44689.P20791"/>
<dbReference type="PaxDb" id="44689-DDB0185216"/>
<dbReference type="EnsemblProtists" id="EAL69153">
    <property type="protein sequence ID" value="EAL69153"/>
    <property type="gene ID" value="DDB_G0276399"/>
</dbReference>
<dbReference type="GeneID" id="8620520"/>
<dbReference type="KEGG" id="ddi:DDB_G0276399"/>
<dbReference type="dictyBase" id="DDB_G0276399">
    <property type="gene designation" value="rab8B"/>
</dbReference>
<dbReference type="VEuPathDB" id="AmoebaDB:DDB_G0276399"/>
<dbReference type="eggNOG" id="KOG0078">
    <property type="taxonomic scope" value="Eukaryota"/>
</dbReference>
<dbReference type="HOGENOM" id="CLU_041217_23_1_1"/>
<dbReference type="InParanoid" id="P20791"/>
<dbReference type="OMA" id="FDWLIKI"/>
<dbReference type="PhylomeDB" id="P20791"/>
<dbReference type="Reactome" id="R-DDI-210500">
    <property type="pathway name" value="Glutamate Neurotransmitter Release Cycle"/>
</dbReference>
<dbReference type="Reactome" id="R-DDI-6798695">
    <property type="pathway name" value="Neutrophil degranulation"/>
</dbReference>
<dbReference type="Reactome" id="R-DDI-8873719">
    <property type="pathway name" value="RAB geranylgeranylation"/>
</dbReference>
<dbReference type="Reactome" id="R-DDI-8876198">
    <property type="pathway name" value="RAB GEFs exchange GTP for GDP on RABs"/>
</dbReference>
<dbReference type="PRO" id="PR:P20791"/>
<dbReference type="Proteomes" id="UP000002195">
    <property type="component" value="Chromosome 2"/>
</dbReference>
<dbReference type="GO" id="GO:0016020">
    <property type="term" value="C:membrane"/>
    <property type="evidence" value="ECO:0000318"/>
    <property type="project" value="GO_Central"/>
</dbReference>
<dbReference type="GO" id="GO:0005886">
    <property type="term" value="C:plasma membrane"/>
    <property type="evidence" value="ECO:0007669"/>
    <property type="project" value="UniProtKB-SubCell"/>
</dbReference>
<dbReference type="GO" id="GO:0005525">
    <property type="term" value="F:GTP binding"/>
    <property type="evidence" value="ECO:0000250"/>
    <property type="project" value="dictyBase"/>
</dbReference>
<dbReference type="GO" id="GO:0003924">
    <property type="term" value="F:GTPase activity"/>
    <property type="evidence" value="ECO:0000318"/>
    <property type="project" value="GO_Central"/>
</dbReference>
<dbReference type="GO" id="GO:0016339">
    <property type="term" value="P:calcium-dependent cell-cell adhesion via plasma membrane cell adhesion molecules"/>
    <property type="evidence" value="ECO:0000315"/>
    <property type="project" value="dictyBase"/>
</dbReference>
<dbReference type="GO" id="GO:0006887">
    <property type="term" value="P:exocytosis"/>
    <property type="evidence" value="ECO:0000318"/>
    <property type="project" value="GO_Central"/>
</dbReference>
<dbReference type="GO" id="GO:0006971">
    <property type="term" value="P:hypotonic response"/>
    <property type="evidence" value="ECO:0007007"/>
    <property type="project" value="dictyBase"/>
</dbReference>
<dbReference type="GO" id="GO:0015031">
    <property type="term" value="P:protein transport"/>
    <property type="evidence" value="ECO:0007669"/>
    <property type="project" value="UniProtKB-KW"/>
</dbReference>
<dbReference type="GO" id="GO:0031157">
    <property type="term" value="P:regulation of aggregate size involved in sorocarp development"/>
    <property type="evidence" value="ECO:0000315"/>
    <property type="project" value="dictyBase"/>
</dbReference>
<dbReference type="GO" id="GO:0009617">
    <property type="term" value="P:response to bacterium"/>
    <property type="evidence" value="ECO:0007007"/>
    <property type="project" value="dictyBase"/>
</dbReference>
<dbReference type="CDD" id="cd01867">
    <property type="entry name" value="Rab8_Rab10_Rab13_like"/>
    <property type="match status" value="1"/>
</dbReference>
<dbReference type="FunFam" id="3.40.50.300:FF:000308">
    <property type="entry name" value="ras-related protein RABE1c-like"/>
    <property type="match status" value="1"/>
</dbReference>
<dbReference type="Gene3D" id="3.40.50.300">
    <property type="entry name" value="P-loop containing nucleotide triphosphate hydrolases"/>
    <property type="match status" value="1"/>
</dbReference>
<dbReference type="InterPro" id="IPR027417">
    <property type="entry name" value="P-loop_NTPase"/>
</dbReference>
<dbReference type="InterPro" id="IPR005225">
    <property type="entry name" value="Small_GTP-bd"/>
</dbReference>
<dbReference type="InterPro" id="IPR001806">
    <property type="entry name" value="Small_GTPase"/>
</dbReference>
<dbReference type="InterPro" id="IPR050305">
    <property type="entry name" value="Small_GTPase_Rab"/>
</dbReference>
<dbReference type="NCBIfam" id="TIGR00231">
    <property type="entry name" value="small_GTP"/>
    <property type="match status" value="1"/>
</dbReference>
<dbReference type="PANTHER" id="PTHR47980">
    <property type="entry name" value="LD44762P"/>
    <property type="match status" value="1"/>
</dbReference>
<dbReference type="Pfam" id="PF00071">
    <property type="entry name" value="Ras"/>
    <property type="match status" value="1"/>
</dbReference>
<dbReference type="PRINTS" id="PR00449">
    <property type="entry name" value="RASTRNSFRMNG"/>
</dbReference>
<dbReference type="SMART" id="SM00175">
    <property type="entry name" value="RAB"/>
    <property type="match status" value="1"/>
</dbReference>
<dbReference type="SMART" id="SM00176">
    <property type="entry name" value="RAN"/>
    <property type="match status" value="1"/>
</dbReference>
<dbReference type="SMART" id="SM00173">
    <property type="entry name" value="RAS"/>
    <property type="match status" value="1"/>
</dbReference>
<dbReference type="SMART" id="SM00174">
    <property type="entry name" value="RHO"/>
    <property type="match status" value="1"/>
</dbReference>
<dbReference type="SUPFAM" id="SSF52540">
    <property type="entry name" value="P-loop containing nucleoside triphosphate hydrolases"/>
    <property type="match status" value="1"/>
</dbReference>
<dbReference type="PROSITE" id="PS51419">
    <property type="entry name" value="RAB"/>
    <property type="match status" value="1"/>
</dbReference>
<keyword id="KW-1003">Cell membrane</keyword>
<keyword id="KW-0342">GTP-binding</keyword>
<keyword id="KW-0449">Lipoprotein</keyword>
<keyword id="KW-0472">Membrane</keyword>
<keyword id="KW-0547">Nucleotide-binding</keyword>
<keyword id="KW-0636">Prenylation</keyword>
<keyword id="KW-0653">Protein transport</keyword>
<keyword id="KW-1185">Reference proteome</keyword>
<keyword id="KW-0813">Transport</keyword>
<proteinExistence type="evidence at transcript level"/>
<name>RAB8B_DICDI</name>
<sequence>MTSPATNKPAAYDFLVKLLLIGDSGVGKSCLLLRFSDGSFTPSFIATIGIDFKIRTIELEGKRIKLQIWDTAGQERFRTITTAYYRGAMGILLVYDVTDEKSFGSIRNWIRNIEQHASDSVNKMLIGNKCDMTEKKVVDSSRGKSLADEYGIKFLETSAKNSVNVEEAFIGLAKDIKKRMIDTPNDPDHTICITPNNKKNTCC</sequence>
<accession>P20791</accession>
<accession>Q551L5</accession>
<feature type="chain" id="PRO_0000121276" description="Ras-related protein Rab-8B">
    <location>
        <begin position="1"/>
        <end position="203"/>
    </location>
</feature>
<feature type="binding site" evidence="1">
    <location>
        <begin position="22"/>
        <end position="29"/>
    </location>
    <ligand>
        <name>GTP</name>
        <dbReference type="ChEBI" id="CHEBI:37565"/>
    </ligand>
</feature>
<feature type="binding site" evidence="1">
    <location>
        <begin position="70"/>
        <end position="74"/>
    </location>
    <ligand>
        <name>GTP</name>
        <dbReference type="ChEBI" id="CHEBI:37565"/>
    </ligand>
</feature>
<feature type="binding site" evidence="1">
    <location>
        <begin position="128"/>
        <end position="131"/>
    </location>
    <ligand>
        <name>GTP</name>
        <dbReference type="ChEBI" id="CHEBI:37565"/>
    </ligand>
</feature>
<feature type="lipid moiety-binding region" description="S-geranylgeranyl cysteine" evidence="1">
    <location>
        <position position="202"/>
    </location>
</feature>
<feature type="lipid moiety-binding region" description="S-geranylgeranyl cysteine" evidence="1">
    <location>
        <position position="203"/>
    </location>
</feature>
<organism>
    <name type="scientific">Dictyostelium discoideum</name>
    <name type="common">Social amoeba</name>
    <dbReference type="NCBI Taxonomy" id="44689"/>
    <lineage>
        <taxon>Eukaryota</taxon>
        <taxon>Amoebozoa</taxon>
        <taxon>Evosea</taxon>
        <taxon>Eumycetozoa</taxon>
        <taxon>Dictyostelia</taxon>
        <taxon>Dictyosteliales</taxon>
        <taxon>Dictyosteliaceae</taxon>
        <taxon>Dictyostelium</taxon>
    </lineage>
</organism>
<reference key="1">
    <citation type="journal article" date="1990" name="Mol. Cell. Biol.">
        <title>SAS1 and SAS2, GTP-binding protein genes in Dictyostelium discoideum with sequence similarities to essential genes in Saccharomyces cerevisiae.</title>
        <authorList>
            <person name="Saxe S.A."/>
            <person name="Kimmel A.R."/>
        </authorList>
    </citation>
    <scope>NUCLEOTIDE SEQUENCE [MRNA]</scope>
</reference>
<reference key="2">
    <citation type="journal article" date="1988" name="Dev. Genet.">
        <title>Genes encoding novel GTP-binding proteins in Dictyostelium.</title>
        <authorList>
            <person name="Saxe S.A."/>
            <person name="Kimmel A.R."/>
        </authorList>
    </citation>
    <scope>NUCLEOTIDE SEQUENCE [GENOMIC DNA]</scope>
</reference>
<reference key="3">
    <citation type="journal article" date="2002" name="Nature">
        <title>Sequence and analysis of chromosome 2 of Dictyostelium discoideum.</title>
        <authorList>
            <person name="Gloeckner G."/>
            <person name="Eichinger L."/>
            <person name="Szafranski K."/>
            <person name="Pachebat J.A."/>
            <person name="Bankier A.T."/>
            <person name="Dear P.H."/>
            <person name="Lehmann R."/>
            <person name="Baumgart C."/>
            <person name="Parra G."/>
            <person name="Abril J.F."/>
            <person name="Guigo R."/>
            <person name="Kumpf K."/>
            <person name="Tunggal B."/>
            <person name="Cox E.C."/>
            <person name="Quail M.A."/>
            <person name="Platzer M."/>
            <person name="Rosenthal A."/>
            <person name="Noegel A.A."/>
        </authorList>
    </citation>
    <scope>NUCLEOTIDE SEQUENCE [LARGE SCALE GENOMIC DNA]</scope>
    <source>
        <strain>AX4</strain>
    </source>
</reference>
<reference key="4">
    <citation type="journal article" date="2005" name="Nature">
        <title>The genome of the social amoeba Dictyostelium discoideum.</title>
        <authorList>
            <person name="Eichinger L."/>
            <person name="Pachebat J.A."/>
            <person name="Gloeckner G."/>
            <person name="Rajandream M.A."/>
            <person name="Sucgang R."/>
            <person name="Berriman M."/>
            <person name="Song J."/>
            <person name="Olsen R."/>
            <person name="Szafranski K."/>
            <person name="Xu Q."/>
            <person name="Tunggal B."/>
            <person name="Kummerfeld S."/>
            <person name="Madera M."/>
            <person name="Konfortov B.A."/>
            <person name="Rivero F."/>
            <person name="Bankier A.T."/>
            <person name="Lehmann R."/>
            <person name="Hamlin N."/>
            <person name="Davies R."/>
            <person name="Gaudet P."/>
            <person name="Fey P."/>
            <person name="Pilcher K."/>
            <person name="Chen G."/>
            <person name="Saunders D."/>
            <person name="Sodergren E.J."/>
            <person name="Davis P."/>
            <person name="Kerhornou A."/>
            <person name="Nie X."/>
            <person name="Hall N."/>
            <person name="Anjard C."/>
            <person name="Hemphill L."/>
            <person name="Bason N."/>
            <person name="Farbrother P."/>
            <person name="Desany B."/>
            <person name="Just E."/>
            <person name="Morio T."/>
            <person name="Rost R."/>
            <person name="Churcher C.M."/>
            <person name="Cooper J."/>
            <person name="Haydock S."/>
            <person name="van Driessche N."/>
            <person name="Cronin A."/>
            <person name="Goodhead I."/>
            <person name="Muzny D.M."/>
            <person name="Mourier T."/>
            <person name="Pain A."/>
            <person name="Lu M."/>
            <person name="Harper D."/>
            <person name="Lindsay R."/>
            <person name="Hauser H."/>
            <person name="James K.D."/>
            <person name="Quiles M."/>
            <person name="Madan Babu M."/>
            <person name="Saito T."/>
            <person name="Buchrieser C."/>
            <person name="Wardroper A."/>
            <person name="Felder M."/>
            <person name="Thangavelu M."/>
            <person name="Johnson D."/>
            <person name="Knights A."/>
            <person name="Loulseged H."/>
            <person name="Mungall K.L."/>
            <person name="Oliver K."/>
            <person name="Price C."/>
            <person name="Quail M.A."/>
            <person name="Urushihara H."/>
            <person name="Hernandez J."/>
            <person name="Rabbinowitsch E."/>
            <person name="Steffen D."/>
            <person name="Sanders M."/>
            <person name="Ma J."/>
            <person name="Kohara Y."/>
            <person name="Sharp S."/>
            <person name="Simmonds M.N."/>
            <person name="Spiegler S."/>
            <person name="Tivey A."/>
            <person name="Sugano S."/>
            <person name="White B."/>
            <person name="Walker D."/>
            <person name="Woodward J.R."/>
            <person name="Winckler T."/>
            <person name="Tanaka Y."/>
            <person name="Shaulsky G."/>
            <person name="Schleicher M."/>
            <person name="Weinstock G.M."/>
            <person name="Rosenthal A."/>
            <person name="Cox E.C."/>
            <person name="Chisholm R.L."/>
            <person name="Gibbs R.A."/>
            <person name="Loomis W.F."/>
            <person name="Platzer M."/>
            <person name="Kay R.R."/>
            <person name="Williams J.G."/>
            <person name="Dear P.H."/>
            <person name="Noegel A.A."/>
            <person name="Barrell B.G."/>
            <person name="Kuspa A."/>
        </authorList>
    </citation>
    <scope>NUCLEOTIDE SEQUENCE [LARGE SCALE GENOMIC DNA]</scope>
    <source>
        <strain>AX4</strain>
    </source>
</reference>
<evidence type="ECO:0000250" key="1"/>
<evidence type="ECO:0000305" key="2"/>
<comment type="function">
    <text evidence="1">Protein transport. Probably involved in vesicular traffic (By similarity).</text>
</comment>
<comment type="subcellular location">
    <subcellularLocation>
        <location evidence="2">Cell membrane</location>
        <topology evidence="2">Lipid-anchor</topology>
        <orientation evidence="2">Cytoplasmic side</orientation>
    </subcellularLocation>
</comment>
<comment type="similarity">
    <text evidence="2">Belongs to the small GTPase superfamily. Rab family.</text>
</comment>
<gene>
    <name type="primary">rab8B</name>
    <name type="synonym">sas2</name>
    <name type="synonym">sasB</name>
    <name type="ORF">DDB_G0276399</name>
</gene>
<protein>
    <recommendedName>
        <fullName>Ras-related protein Rab-8B</fullName>
    </recommendedName>
    <alternativeName>
        <fullName>GTP-binding protein SAS2</fullName>
    </alternativeName>
</protein>